<organism>
    <name type="scientific">Staphylococcus aureus (strain COL)</name>
    <dbReference type="NCBI Taxonomy" id="93062"/>
    <lineage>
        <taxon>Bacteria</taxon>
        <taxon>Bacillati</taxon>
        <taxon>Bacillota</taxon>
        <taxon>Bacilli</taxon>
        <taxon>Bacillales</taxon>
        <taxon>Staphylococcaceae</taxon>
        <taxon>Staphylococcus</taxon>
    </lineage>
</organism>
<feature type="chain" id="PRO_0000175700" description="Holo-[acyl-carrier-protein] synthase">
    <location>
        <begin position="1"/>
        <end position="119"/>
    </location>
</feature>
<feature type="binding site" evidence="1">
    <location>
        <position position="8"/>
    </location>
    <ligand>
        <name>Mg(2+)</name>
        <dbReference type="ChEBI" id="CHEBI:18420"/>
    </ligand>
</feature>
<feature type="binding site" evidence="1">
    <location>
        <position position="59"/>
    </location>
    <ligand>
        <name>Mg(2+)</name>
        <dbReference type="ChEBI" id="CHEBI:18420"/>
    </ligand>
</feature>
<feature type="strand" evidence="3">
    <location>
        <begin position="2"/>
        <end position="11"/>
    </location>
</feature>
<feature type="helix" evidence="3">
    <location>
        <begin position="12"/>
        <end position="21"/>
    </location>
</feature>
<feature type="helix" evidence="3">
    <location>
        <begin position="23"/>
        <end position="25"/>
    </location>
</feature>
<feature type="helix" evidence="3">
    <location>
        <begin position="26"/>
        <end position="29"/>
    </location>
</feature>
<feature type="helix" evidence="3">
    <location>
        <begin position="32"/>
        <end position="39"/>
    </location>
</feature>
<feature type="helix" evidence="3">
    <location>
        <begin position="44"/>
        <end position="65"/>
    </location>
</feature>
<feature type="helix" evidence="2">
    <location>
        <begin position="67"/>
        <end position="70"/>
    </location>
</feature>
<feature type="helix" evidence="3">
    <location>
        <begin position="75"/>
        <end position="77"/>
    </location>
</feature>
<feature type="strand" evidence="2">
    <location>
        <begin position="80"/>
        <end position="82"/>
    </location>
</feature>
<feature type="strand" evidence="2">
    <location>
        <begin position="88"/>
        <end position="90"/>
    </location>
</feature>
<feature type="strand" evidence="3">
    <location>
        <begin position="95"/>
        <end position="103"/>
    </location>
</feature>
<feature type="strand" evidence="3">
    <location>
        <begin position="105"/>
        <end position="116"/>
    </location>
</feature>
<dbReference type="EC" id="2.7.8.7" evidence="1"/>
<dbReference type="EMBL" id="CP000046">
    <property type="protein sequence ID" value="AAW37023.1"/>
    <property type="molecule type" value="Genomic_DNA"/>
</dbReference>
<dbReference type="RefSeq" id="WP_000581200.1">
    <property type="nucleotide sequence ID" value="NZ_JBGOFO010000007.1"/>
</dbReference>
<dbReference type="PDB" id="4DXE">
    <property type="method" value="X-ray"/>
    <property type="resolution" value="2.51 A"/>
    <property type="chains" value="A/B/C/D/E/F=1-119"/>
</dbReference>
<dbReference type="PDB" id="4JM7">
    <property type="method" value="X-ray"/>
    <property type="resolution" value="1.82 A"/>
    <property type="chains" value="A/B/C=1-119"/>
</dbReference>
<dbReference type="PDB" id="5CXD">
    <property type="method" value="X-ray"/>
    <property type="resolution" value="1.75 A"/>
    <property type="chains" value="A/B/C=1-119"/>
</dbReference>
<dbReference type="PDBsum" id="4DXE"/>
<dbReference type="PDBsum" id="4JM7"/>
<dbReference type="PDBsum" id="5CXD"/>
<dbReference type="SMR" id="Q5HED0"/>
<dbReference type="KEGG" id="sac:SACOL2061"/>
<dbReference type="HOGENOM" id="CLU_089696_1_2_9"/>
<dbReference type="EvolutionaryTrace" id="Q5HED0"/>
<dbReference type="Proteomes" id="UP000000530">
    <property type="component" value="Chromosome"/>
</dbReference>
<dbReference type="GO" id="GO:0005737">
    <property type="term" value="C:cytoplasm"/>
    <property type="evidence" value="ECO:0007669"/>
    <property type="project" value="UniProtKB-SubCell"/>
</dbReference>
<dbReference type="GO" id="GO:0008897">
    <property type="term" value="F:holo-[acyl-carrier-protein] synthase activity"/>
    <property type="evidence" value="ECO:0007669"/>
    <property type="project" value="UniProtKB-UniRule"/>
</dbReference>
<dbReference type="GO" id="GO:0000287">
    <property type="term" value="F:magnesium ion binding"/>
    <property type="evidence" value="ECO:0007669"/>
    <property type="project" value="UniProtKB-UniRule"/>
</dbReference>
<dbReference type="GO" id="GO:0006633">
    <property type="term" value="P:fatty acid biosynthetic process"/>
    <property type="evidence" value="ECO:0007669"/>
    <property type="project" value="UniProtKB-UniRule"/>
</dbReference>
<dbReference type="Gene3D" id="3.90.470.20">
    <property type="entry name" value="4'-phosphopantetheinyl transferase domain"/>
    <property type="match status" value="1"/>
</dbReference>
<dbReference type="HAMAP" id="MF_00101">
    <property type="entry name" value="AcpS"/>
    <property type="match status" value="1"/>
</dbReference>
<dbReference type="InterPro" id="IPR008278">
    <property type="entry name" value="4-PPantetheinyl_Trfase_dom"/>
</dbReference>
<dbReference type="InterPro" id="IPR037143">
    <property type="entry name" value="4-PPantetheinyl_Trfase_dom_sf"/>
</dbReference>
<dbReference type="InterPro" id="IPR002582">
    <property type="entry name" value="ACPS"/>
</dbReference>
<dbReference type="InterPro" id="IPR004568">
    <property type="entry name" value="Ppantetheine-prot_Trfase_dom"/>
</dbReference>
<dbReference type="NCBIfam" id="TIGR00516">
    <property type="entry name" value="acpS"/>
    <property type="match status" value="1"/>
</dbReference>
<dbReference type="NCBIfam" id="TIGR00556">
    <property type="entry name" value="pantethn_trn"/>
    <property type="match status" value="1"/>
</dbReference>
<dbReference type="Pfam" id="PF01648">
    <property type="entry name" value="ACPS"/>
    <property type="match status" value="1"/>
</dbReference>
<dbReference type="SUPFAM" id="SSF56214">
    <property type="entry name" value="4'-phosphopantetheinyl transferase"/>
    <property type="match status" value="1"/>
</dbReference>
<name>ACPS_STAAC</name>
<reference key="1">
    <citation type="journal article" date="2005" name="J. Bacteriol.">
        <title>Insights on evolution of virulence and resistance from the complete genome analysis of an early methicillin-resistant Staphylococcus aureus strain and a biofilm-producing methicillin-resistant Staphylococcus epidermidis strain.</title>
        <authorList>
            <person name="Gill S.R."/>
            <person name="Fouts D.E."/>
            <person name="Archer G.L."/>
            <person name="Mongodin E.F."/>
            <person name="DeBoy R.T."/>
            <person name="Ravel J."/>
            <person name="Paulsen I.T."/>
            <person name="Kolonay J.F."/>
            <person name="Brinkac L.M."/>
            <person name="Beanan M.J."/>
            <person name="Dodson R.J."/>
            <person name="Daugherty S.C."/>
            <person name="Madupu R."/>
            <person name="Angiuoli S.V."/>
            <person name="Durkin A.S."/>
            <person name="Haft D.H."/>
            <person name="Vamathevan J.J."/>
            <person name="Khouri H."/>
            <person name="Utterback T.R."/>
            <person name="Lee C."/>
            <person name="Dimitrov G."/>
            <person name="Jiang L."/>
            <person name="Qin H."/>
            <person name="Weidman J."/>
            <person name="Tran K."/>
            <person name="Kang K.H."/>
            <person name="Hance I.R."/>
            <person name="Nelson K.E."/>
            <person name="Fraser C.M."/>
        </authorList>
    </citation>
    <scope>NUCLEOTIDE SEQUENCE [LARGE SCALE GENOMIC DNA]</scope>
    <source>
        <strain>COL</strain>
    </source>
</reference>
<protein>
    <recommendedName>
        <fullName evidence="1">Holo-[acyl-carrier-protein] synthase</fullName>
        <shortName evidence="1">Holo-ACP synthase</shortName>
        <ecNumber evidence="1">2.7.8.7</ecNumber>
    </recommendedName>
    <alternativeName>
        <fullName evidence="1">4'-phosphopantetheinyl transferase AcpS</fullName>
    </alternativeName>
</protein>
<comment type="function">
    <text evidence="1">Transfers the 4'-phosphopantetheine moiety from coenzyme A to a Ser of acyl-carrier-protein.</text>
</comment>
<comment type="catalytic activity">
    <reaction evidence="1">
        <text>apo-[ACP] + CoA = holo-[ACP] + adenosine 3',5'-bisphosphate + H(+)</text>
        <dbReference type="Rhea" id="RHEA:12068"/>
        <dbReference type="Rhea" id="RHEA-COMP:9685"/>
        <dbReference type="Rhea" id="RHEA-COMP:9690"/>
        <dbReference type="ChEBI" id="CHEBI:15378"/>
        <dbReference type="ChEBI" id="CHEBI:29999"/>
        <dbReference type="ChEBI" id="CHEBI:57287"/>
        <dbReference type="ChEBI" id="CHEBI:58343"/>
        <dbReference type="ChEBI" id="CHEBI:64479"/>
        <dbReference type="EC" id="2.7.8.7"/>
    </reaction>
</comment>
<comment type="cofactor">
    <cofactor evidence="1">
        <name>Mg(2+)</name>
        <dbReference type="ChEBI" id="CHEBI:18420"/>
    </cofactor>
</comment>
<comment type="subcellular location">
    <subcellularLocation>
        <location evidence="1">Cytoplasm</location>
    </subcellularLocation>
</comment>
<comment type="similarity">
    <text evidence="1">Belongs to the P-Pant transferase superfamily. AcpS family.</text>
</comment>
<sequence length="119" mass="13606">MIHGIGVDLIEIDRIQALYSKQPKLVERILTKNEQHKFNNFTHEQRKIEFLAGRFATKEAFSKALGTGLGKHVAFNDIDCYNDELGKPKIDYEGFIVHVSISHTEHYAMSQVVLEKSAF</sequence>
<gene>
    <name evidence="1" type="primary">acpS</name>
    <name type="ordered locus">SACOL2061</name>
</gene>
<evidence type="ECO:0000255" key="1">
    <source>
        <dbReference type="HAMAP-Rule" id="MF_00101"/>
    </source>
</evidence>
<evidence type="ECO:0007829" key="2">
    <source>
        <dbReference type="PDB" id="4JM7"/>
    </source>
</evidence>
<evidence type="ECO:0007829" key="3">
    <source>
        <dbReference type="PDB" id="5CXD"/>
    </source>
</evidence>
<accession>Q5HED0</accession>
<proteinExistence type="evidence at protein level"/>
<keyword id="KW-0002">3D-structure</keyword>
<keyword id="KW-0963">Cytoplasm</keyword>
<keyword id="KW-0275">Fatty acid biosynthesis</keyword>
<keyword id="KW-0276">Fatty acid metabolism</keyword>
<keyword id="KW-0444">Lipid biosynthesis</keyword>
<keyword id="KW-0443">Lipid metabolism</keyword>
<keyword id="KW-0460">Magnesium</keyword>
<keyword id="KW-0479">Metal-binding</keyword>
<keyword id="KW-0808">Transferase</keyword>